<proteinExistence type="inferred from homology"/>
<keyword id="KW-0067">ATP-binding</keyword>
<keyword id="KW-0963">Cytoplasm</keyword>
<keyword id="KW-1015">Disulfide bond</keyword>
<keyword id="KW-0547">Nucleotide-binding</keyword>
<keyword id="KW-0694">RNA-binding</keyword>
<keyword id="KW-0808">Transferase</keyword>
<keyword id="KW-0819">tRNA processing</keyword>
<keyword id="KW-0820">tRNA-binding</keyword>
<name>MNMA_XYLFM</name>
<evidence type="ECO:0000255" key="1">
    <source>
        <dbReference type="HAMAP-Rule" id="MF_00144"/>
    </source>
</evidence>
<feature type="chain" id="PRO_0000349860" description="tRNA-specific 2-thiouridylase MnmA">
    <location>
        <begin position="1"/>
        <end position="379"/>
    </location>
</feature>
<feature type="region of interest" description="Interaction with target base in tRNA" evidence="1">
    <location>
        <begin position="94"/>
        <end position="96"/>
    </location>
</feature>
<feature type="region of interest" description="Interaction with tRNA" evidence="1">
    <location>
        <begin position="145"/>
        <end position="147"/>
    </location>
</feature>
<feature type="region of interest" description="Interaction with tRNA" evidence="1">
    <location>
        <begin position="307"/>
        <end position="308"/>
    </location>
</feature>
<feature type="active site" description="Nucleophile" evidence="1">
    <location>
        <position position="99"/>
    </location>
</feature>
<feature type="active site" description="Cysteine persulfide intermediate" evidence="1">
    <location>
        <position position="195"/>
    </location>
</feature>
<feature type="binding site" evidence="1">
    <location>
        <begin position="9"/>
        <end position="16"/>
    </location>
    <ligand>
        <name>ATP</name>
        <dbReference type="ChEBI" id="CHEBI:30616"/>
    </ligand>
</feature>
<feature type="binding site" evidence="1">
    <location>
        <position position="35"/>
    </location>
    <ligand>
        <name>ATP</name>
        <dbReference type="ChEBI" id="CHEBI:30616"/>
    </ligand>
</feature>
<feature type="binding site" evidence="1">
    <location>
        <position position="123"/>
    </location>
    <ligand>
        <name>ATP</name>
        <dbReference type="ChEBI" id="CHEBI:30616"/>
    </ligand>
</feature>
<feature type="site" description="Interaction with tRNA" evidence="1">
    <location>
        <position position="124"/>
    </location>
</feature>
<feature type="site" description="Interaction with tRNA" evidence="1">
    <location>
        <position position="340"/>
    </location>
</feature>
<feature type="disulfide bond" description="Alternate" evidence="1">
    <location>
        <begin position="99"/>
        <end position="195"/>
    </location>
</feature>
<gene>
    <name evidence="1" type="primary">mnmA</name>
    <name type="ordered locus">Xfasm12_0783</name>
</gene>
<reference key="1">
    <citation type="journal article" date="2010" name="J. Bacteriol.">
        <title>Whole genome sequences of two Xylella fastidiosa strains (M12 and M23) causing almond leaf scorch disease in California.</title>
        <authorList>
            <person name="Chen J."/>
            <person name="Xie G."/>
            <person name="Han S."/>
            <person name="Chertkov O."/>
            <person name="Sims D."/>
            <person name="Civerolo E.L."/>
        </authorList>
    </citation>
    <scope>NUCLEOTIDE SEQUENCE [LARGE SCALE GENOMIC DNA]</scope>
    <source>
        <strain>M12</strain>
    </source>
</reference>
<organism>
    <name type="scientific">Xylella fastidiosa (strain M12)</name>
    <dbReference type="NCBI Taxonomy" id="405440"/>
    <lineage>
        <taxon>Bacteria</taxon>
        <taxon>Pseudomonadati</taxon>
        <taxon>Pseudomonadota</taxon>
        <taxon>Gammaproteobacteria</taxon>
        <taxon>Lysobacterales</taxon>
        <taxon>Lysobacteraceae</taxon>
        <taxon>Xylella</taxon>
    </lineage>
</organism>
<dbReference type="EC" id="2.8.1.13" evidence="1"/>
<dbReference type="EMBL" id="CP000941">
    <property type="protein sequence ID" value="ACA11773.1"/>
    <property type="molecule type" value="Genomic_DNA"/>
</dbReference>
<dbReference type="RefSeq" id="WP_004083753.1">
    <property type="nucleotide sequence ID" value="NC_010513.1"/>
</dbReference>
<dbReference type="SMR" id="B0U6Q7"/>
<dbReference type="KEGG" id="xfm:Xfasm12_0783"/>
<dbReference type="HOGENOM" id="CLU_035188_1_0_6"/>
<dbReference type="GO" id="GO:0005737">
    <property type="term" value="C:cytoplasm"/>
    <property type="evidence" value="ECO:0007669"/>
    <property type="project" value="UniProtKB-SubCell"/>
</dbReference>
<dbReference type="GO" id="GO:0005524">
    <property type="term" value="F:ATP binding"/>
    <property type="evidence" value="ECO:0007669"/>
    <property type="project" value="UniProtKB-KW"/>
</dbReference>
<dbReference type="GO" id="GO:0000049">
    <property type="term" value="F:tRNA binding"/>
    <property type="evidence" value="ECO:0007669"/>
    <property type="project" value="UniProtKB-KW"/>
</dbReference>
<dbReference type="GO" id="GO:0103016">
    <property type="term" value="F:tRNA-uridine 2-sulfurtransferase activity"/>
    <property type="evidence" value="ECO:0007669"/>
    <property type="project" value="UniProtKB-EC"/>
</dbReference>
<dbReference type="GO" id="GO:0002143">
    <property type="term" value="P:tRNA wobble position uridine thiolation"/>
    <property type="evidence" value="ECO:0007669"/>
    <property type="project" value="TreeGrafter"/>
</dbReference>
<dbReference type="CDD" id="cd01998">
    <property type="entry name" value="MnmA_TRMU-like"/>
    <property type="match status" value="1"/>
</dbReference>
<dbReference type="FunFam" id="2.30.30.280:FF:000001">
    <property type="entry name" value="tRNA-specific 2-thiouridylase MnmA"/>
    <property type="match status" value="1"/>
</dbReference>
<dbReference type="FunFam" id="2.40.30.10:FF:000023">
    <property type="entry name" value="tRNA-specific 2-thiouridylase MnmA"/>
    <property type="match status" value="1"/>
</dbReference>
<dbReference type="FunFam" id="3.40.50.620:FF:000004">
    <property type="entry name" value="tRNA-specific 2-thiouridylase MnmA"/>
    <property type="match status" value="1"/>
</dbReference>
<dbReference type="Gene3D" id="2.30.30.280">
    <property type="entry name" value="Adenine nucleotide alpha hydrolases-like domains"/>
    <property type="match status" value="1"/>
</dbReference>
<dbReference type="Gene3D" id="3.40.50.620">
    <property type="entry name" value="HUPs"/>
    <property type="match status" value="1"/>
</dbReference>
<dbReference type="Gene3D" id="2.40.30.10">
    <property type="entry name" value="Translation factors"/>
    <property type="match status" value="1"/>
</dbReference>
<dbReference type="HAMAP" id="MF_00144">
    <property type="entry name" value="tRNA_thiouridyl_MnmA"/>
    <property type="match status" value="1"/>
</dbReference>
<dbReference type="InterPro" id="IPR004506">
    <property type="entry name" value="MnmA-like"/>
</dbReference>
<dbReference type="InterPro" id="IPR046885">
    <property type="entry name" value="MnmA-like_C"/>
</dbReference>
<dbReference type="InterPro" id="IPR046884">
    <property type="entry name" value="MnmA-like_central"/>
</dbReference>
<dbReference type="InterPro" id="IPR023382">
    <property type="entry name" value="MnmA-like_central_sf"/>
</dbReference>
<dbReference type="InterPro" id="IPR014729">
    <property type="entry name" value="Rossmann-like_a/b/a_fold"/>
</dbReference>
<dbReference type="NCBIfam" id="NF001138">
    <property type="entry name" value="PRK00143.1"/>
    <property type="match status" value="1"/>
</dbReference>
<dbReference type="NCBIfam" id="TIGR00420">
    <property type="entry name" value="trmU"/>
    <property type="match status" value="1"/>
</dbReference>
<dbReference type="PANTHER" id="PTHR11933:SF5">
    <property type="entry name" value="MITOCHONDRIAL TRNA-SPECIFIC 2-THIOURIDYLASE 1"/>
    <property type="match status" value="1"/>
</dbReference>
<dbReference type="PANTHER" id="PTHR11933">
    <property type="entry name" value="TRNA 5-METHYLAMINOMETHYL-2-THIOURIDYLATE -METHYLTRANSFERASE"/>
    <property type="match status" value="1"/>
</dbReference>
<dbReference type="Pfam" id="PF03054">
    <property type="entry name" value="tRNA_Me_trans"/>
    <property type="match status" value="1"/>
</dbReference>
<dbReference type="Pfam" id="PF20258">
    <property type="entry name" value="tRNA_Me_trans_C"/>
    <property type="match status" value="1"/>
</dbReference>
<dbReference type="Pfam" id="PF20259">
    <property type="entry name" value="tRNA_Me_trans_M"/>
    <property type="match status" value="1"/>
</dbReference>
<dbReference type="SUPFAM" id="SSF52402">
    <property type="entry name" value="Adenine nucleotide alpha hydrolases-like"/>
    <property type="match status" value="1"/>
</dbReference>
<comment type="function">
    <text evidence="1">Catalyzes the 2-thiolation of uridine at the wobble position (U34) of tRNA, leading to the formation of s(2)U34.</text>
</comment>
<comment type="catalytic activity">
    <reaction evidence="1">
        <text>S-sulfanyl-L-cysteinyl-[protein] + uridine(34) in tRNA + AH2 + ATP = 2-thiouridine(34) in tRNA + L-cysteinyl-[protein] + A + AMP + diphosphate + H(+)</text>
        <dbReference type="Rhea" id="RHEA:47032"/>
        <dbReference type="Rhea" id="RHEA-COMP:10131"/>
        <dbReference type="Rhea" id="RHEA-COMP:11726"/>
        <dbReference type="Rhea" id="RHEA-COMP:11727"/>
        <dbReference type="Rhea" id="RHEA-COMP:11728"/>
        <dbReference type="ChEBI" id="CHEBI:13193"/>
        <dbReference type="ChEBI" id="CHEBI:15378"/>
        <dbReference type="ChEBI" id="CHEBI:17499"/>
        <dbReference type="ChEBI" id="CHEBI:29950"/>
        <dbReference type="ChEBI" id="CHEBI:30616"/>
        <dbReference type="ChEBI" id="CHEBI:33019"/>
        <dbReference type="ChEBI" id="CHEBI:61963"/>
        <dbReference type="ChEBI" id="CHEBI:65315"/>
        <dbReference type="ChEBI" id="CHEBI:87170"/>
        <dbReference type="ChEBI" id="CHEBI:456215"/>
        <dbReference type="EC" id="2.8.1.13"/>
    </reaction>
</comment>
<comment type="subcellular location">
    <subcellularLocation>
        <location evidence="1">Cytoplasm</location>
    </subcellularLocation>
</comment>
<comment type="similarity">
    <text evidence="1">Belongs to the MnmA/TRMU family.</text>
</comment>
<sequence length="379" mass="43126">MNTPRIIVAMSGGVDSSVAAWRLNSQREAIAGLFMRNWTDDGNGQCHAEEDRRDAVAVCGILGIAFHFRDFSHEYWQEVFTHFLAEYANGRTPNPDVLCNREIKFKHFLETARELGADRIATGHYARIEHYRQRWHLLRGADRSKDQSYFLHQLGQEQLAATLFPIGDLEKQQLRQLAHQTGLPTHAKKDSTGICFIGERNFREFLKQYLPAQPGEIRDPQEQRIAEHPGVFYFTLGQRQGLNIGGVRNRPPSPWYVIGKDLATNVLYVDQHRDSPFLQSRWLRSEPAHWVSGSPPAHTFTCTAQTRYRQADEPCKVTVRNDGSLDVDFTRTQWAVTPGQSLVLYDGNECLGGAVIATTDAPLERKRARNLSKTENVLQ</sequence>
<accession>B0U6Q7</accession>
<protein>
    <recommendedName>
        <fullName evidence="1">tRNA-specific 2-thiouridylase MnmA</fullName>
        <ecNumber evidence="1">2.8.1.13</ecNumber>
    </recommendedName>
</protein>